<protein>
    <recommendedName>
        <fullName>Uncharacterized protein MT2646</fullName>
    </recommendedName>
</protein>
<keyword id="KW-1185">Reference proteome</keyword>
<accession>P9WL90</accession>
<accession>L0TA80</accession>
<accession>P65013</accession>
<accession>Q50651</accession>
<proteinExistence type="predicted"/>
<organism>
    <name type="scientific">Mycobacterium tuberculosis (strain CDC 1551 / Oshkosh)</name>
    <dbReference type="NCBI Taxonomy" id="83331"/>
    <lineage>
        <taxon>Bacteria</taxon>
        <taxon>Bacillati</taxon>
        <taxon>Actinomycetota</taxon>
        <taxon>Actinomycetes</taxon>
        <taxon>Mycobacteriales</taxon>
        <taxon>Mycobacteriaceae</taxon>
        <taxon>Mycobacterium</taxon>
        <taxon>Mycobacterium tuberculosis complex</taxon>
    </lineage>
</organism>
<dbReference type="EMBL" id="AE000516">
    <property type="protein sequence ID" value="AAK46959.1"/>
    <property type="molecule type" value="Genomic_DNA"/>
</dbReference>
<dbReference type="PIR" id="A70724">
    <property type="entry name" value="A70724"/>
</dbReference>
<dbReference type="RefSeq" id="WP_003413336.1">
    <property type="nucleotide sequence ID" value="NZ_KK341227.1"/>
</dbReference>
<dbReference type="SMR" id="P9WL90"/>
<dbReference type="KEGG" id="mtc:MT2646"/>
<dbReference type="PATRIC" id="fig|83331.31.peg.2853"/>
<dbReference type="HOGENOM" id="CLU_138549_1_1_11"/>
<dbReference type="Proteomes" id="UP000001020">
    <property type="component" value="Chromosome"/>
</dbReference>
<sequence length="129" mass="14264">MATWDDVARIVGGLPLTAEQAPHDWRVGRKLLAWERPLRKSDREALTRAGSEPPSGDIVGVRVSDEGVKFALIADEPGVYFTTPHFDGYPAVLVRLAEIEVRDLEELITEAWLMQAPKQLVQAFLANSG</sequence>
<feature type="chain" id="PRO_0000427520" description="Uncharacterized protein MT2646">
    <location>
        <begin position="1"/>
        <end position="129"/>
    </location>
</feature>
<name>Y2570_MYCTO</name>
<reference key="1">
    <citation type="journal article" date="2002" name="J. Bacteriol.">
        <title>Whole-genome comparison of Mycobacterium tuberculosis clinical and laboratory strains.</title>
        <authorList>
            <person name="Fleischmann R.D."/>
            <person name="Alland D."/>
            <person name="Eisen J.A."/>
            <person name="Carpenter L."/>
            <person name="White O."/>
            <person name="Peterson J.D."/>
            <person name="DeBoy R.T."/>
            <person name="Dodson R.J."/>
            <person name="Gwinn M.L."/>
            <person name="Haft D.H."/>
            <person name="Hickey E.K."/>
            <person name="Kolonay J.F."/>
            <person name="Nelson W.C."/>
            <person name="Umayam L.A."/>
            <person name="Ermolaeva M.D."/>
            <person name="Salzberg S.L."/>
            <person name="Delcher A."/>
            <person name="Utterback T.R."/>
            <person name="Weidman J.F."/>
            <person name="Khouri H.M."/>
            <person name="Gill J."/>
            <person name="Mikula A."/>
            <person name="Bishai W."/>
            <person name="Jacobs W.R. Jr."/>
            <person name="Venter J.C."/>
            <person name="Fraser C.M."/>
        </authorList>
    </citation>
    <scope>NUCLEOTIDE SEQUENCE [LARGE SCALE GENOMIC DNA]</scope>
    <source>
        <strain>CDC 1551 / Oshkosh</strain>
    </source>
</reference>
<gene>
    <name type="ordered locus">MT2646</name>
</gene>